<evidence type="ECO:0000255" key="1">
    <source>
        <dbReference type="HAMAP-Rule" id="MF_00657"/>
    </source>
</evidence>
<protein>
    <recommendedName>
        <fullName evidence="1">PKHD-type hydroxylase BPSS1206</fullName>
        <ecNumber evidence="1">1.14.11.-</ecNumber>
    </recommendedName>
</protein>
<organism>
    <name type="scientific">Burkholderia pseudomallei (strain K96243)</name>
    <dbReference type="NCBI Taxonomy" id="272560"/>
    <lineage>
        <taxon>Bacteria</taxon>
        <taxon>Pseudomonadati</taxon>
        <taxon>Pseudomonadota</taxon>
        <taxon>Betaproteobacteria</taxon>
        <taxon>Burkholderiales</taxon>
        <taxon>Burkholderiaceae</taxon>
        <taxon>Burkholderia</taxon>
        <taxon>pseudomallei group</taxon>
    </lineage>
</organism>
<gene>
    <name type="ordered locus">BPSS1206</name>
</gene>
<sequence>MMLHIPGVLTKEQVAQCRDILDAADWTDGNATSGAQSALAKRNRQLPEGSPAARAAGDAIQDALACNALFFSAALPLKVFPPLFNRYAGGDAFGTHVDNAIRLLRGTDFRVRSDLSATLFLEEPEHYDGGELCVEDTYGVHRAKLPAGDMVLYPASSLHHVTPVTRGARVASFFWIQSMVRDDADRTLLYQLDTQIQRLTAEKGGRDASVIALTGIYHNLLRRWADA</sequence>
<accession>Q63L05</accession>
<dbReference type="EC" id="1.14.11.-" evidence="1"/>
<dbReference type="EMBL" id="BX571966">
    <property type="protein sequence ID" value="CAH38673.1"/>
    <property type="molecule type" value="Genomic_DNA"/>
</dbReference>
<dbReference type="RefSeq" id="WP_004528491.1">
    <property type="nucleotide sequence ID" value="NZ_CP009537.1"/>
</dbReference>
<dbReference type="RefSeq" id="YP_111216.1">
    <property type="nucleotide sequence ID" value="NC_006351.1"/>
</dbReference>
<dbReference type="SMR" id="Q63L05"/>
<dbReference type="STRING" id="272560.BPSS1206"/>
<dbReference type="KEGG" id="bps:BPSS1206"/>
<dbReference type="PATRIC" id="fig|272560.51.peg.4444"/>
<dbReference type="eggNOG" id="COG3128">
    <property type="taxonomic scope" value="Bacteria"/>
</dbReference>
<dbReference type="Proteomes" id="UP000000605">
    <property type="component" value="Chromosome 2"/>
</dbReference>
<dbReference type="GO" id="GO:0016706">
    <property type="term" value="F:2-oxoglutarate-dependent dioxygenase activity"/>
    <property type="evidence" value="ECO:0007669"/>
    <property type="project" value="UniProtKB-UniRule"/>
</dbReference>
<dbReference type="GO" id="GO:0005506">
    <property type="term" value="F:iron ion binding"/>
    <property type="evidence" value="ECO:0007669"/>
    <property type="project" value="UniProtKB-UniRule"/>
</dbReference>
<dbReference type="GO" id="GO:0031418">
    <property type="term" value="F:L-ascorbic acid binding"/>
    <property type="evidence" value="ECO:0007669"/>
    <property type="project" value="UniProtKB-KW"/>
</dbReference>
<dbReference type="GO" id="GO:0006974">
    <property type="term" value="P:DNA damage response"/>
    <property type="evidence" value="ECO:0007669"/>
    <property type="project" value="TreeGrafter"/>
</dbReference>
<dbReference type="GO" id="GO:0006879">
    <property type="term" value="P:intracellular iron ion homeostasis"/>
    <property type="evidence" value="ECO:0007669"/>
    <property type="project" value="TreeGrafter"/>
</dbReference>
<dbReference type="Gene3D" id="2.60.120.620">
    <property type="entry name" value="q2cbj1_9rhob like domain"/>
    <property type="match status" value="1"/>
</dbReference>
<dbReference type="Gene3D" id="4.10.860.20">
    <property type="entry name" value="Rabenosyn, Rab binding domain"/>
    <property type="match status" value="1"/>
</dbReference>
<dbReference type="HAMAP" id="MF_00657">
    <property type="entry name" value="Hydroxyl_YbiX"/>
    <property type="match status" value="1"/>
</dbReference>
<dbReference type="InterPro" id="IPR005123">
    <property type="entry name" value="Oxoglu/Fe-dep_dioxygenase_dom"/>
</dbReference>
<dbReference type="InterPro" id="IPR041097">
    <property type="entry name" value="PKHD_C"/>
</dbReference>
<dbReference type="InterPro" id="IPR023550">
    <property type="entry name" value="PKHD_hydroxylase"/>
</dbReference>
<dbReference type="InterPro" id="IPR006620">
    <property type="entry name" value="Pro_4_hyd_alph"/>
</dbReference>
<dbReference type="InterPro" id="IPR044862">
    <property type="entry name" value="Pro_4_hyd_alph_FE2OG_OXY"/>
</dbReference>
<dbReference type="NCBIfam" id="NF003973">
    <property type="entry name" value="PRK05467.1-2"/>
    <property type="match status" value="1"/>
</dbReference>
<dbReference type="NCBIfam" id="NF003974">
    <property type="entry name" value="PRK05467.1-3"/>
    <property type="match status" value="1"/>
</dbReference>
<dbReference type="NCBIfam" id="NF003975">
    <property type="entry name" value="PRK05467.1-4"/>
    <property type="match status" value="1"/>
</dbReference>
<dbReference type="PANTHER" id="PTHR41536">
    <property type="entry name" value="PKHD-TYPE HYDROXYLASE YBIX"/>
    <property type="match status" value="1"/>
</dbReference>
<dbReference type="PANTHER" id="PTHR41536:SF1">
    <property type="entry name" value="PKHD-TYPE HYDROXYLASE YBIX"/>
    <property type="match status" value="1"/>
</dbReference>
<dbReference type="Pfam" id="PF13640">
    <property type="entry name" value="2OG-FeII_Oxy_3"/>
    <property type="match status" value="1"/>
</dbReference>
<dbReference type="Pfam" id="PF18331">
    <property type="entry name" value="PKHD_C"/>
    <property type="match status" value="1"/>
</dbReference>
<dbReference type="SMART" id="SM00702">
    <property type="entry name" value="P4Hc"/>
    <property type="match status" value="1"/>
</dbReference>
<dbReference type="SUPFAM" id="SSF51197">
    <property type="entry name" value="Clavaminate synthase-like"/>
    <property type="match status" value="1"/>
</dbReference>
<dbReference type="PROSITE" id="PS51471">
    <property type="entry name" value="FE2OG_OXY"/>
    <property type="match status" value="1"/>
</dbReference>
<feature type="chain" id="PRO_1000061715" description="PKHD-type hydroxylase BPSS1206">
    <location>
        <begin position="1"/>
        <end position="227"/>
    </location>
</feature>
<feature type="domain" description="Fe2OG dioxygenase" evidence="1">
    <location>
        <begin position="78"/>
        <end position="178"/>
    </location>
</feature>
<feature type="binding site" evidence="1">
    <location>
        <position position="96"/>
    </location>
    <ligand>
        <name>Fe cation</name>
        <dbReference type="ChEBI" id="CHEBI:24875"/>
    </ligand>
</feature>
<feature type="binding site" evidence="1">
    <location>
        <position position="98"/>
    </location>
    <ligand>
        <name>Fe cation</name>
        <dbReference type="ChEBI" id="CHEBI:24875"/>
    </ligand>
</feature>
<feature type="binding site" evidence="1">
    <location>
        <position position="159"/>
    </location>
    <ligand>
        <name>Fe cation</name>
        <dbReference type="ChEBI" id="CHEBI:24875"/>
    </ligand>
</feature>
<feature type="binding site" evidence="1">
    <location>
        <position position="169"/>
    </location>
    <ligand>
        <name>2-oxoglutarate</name>
        <dbReference type="ChEBI" id="CHEBI:16810"/>
    </ligand>
</feature>
<comment type="cofactor">
    <cofactor evidence="1">
        <name>Fe(2+)</name>
        <dbReference type="ChEBI" id="CHEBI:29033"/>
    </cofactor>
    <text evidence="1">Binds 1 Fe(2+) ion per subunit.</text>
</comment>
<comment type="cofactor">
    <cofactor evidence="1">
        <name>L-ascorbate</name>
        <dbReference type="ChEBI" id="CHEBI:38290"/>
    </cofactor>
</comment>
<reference key="1">
    <citation type="journal article" date="2004" name="Proc. Natl. Acad. Sci. U.S.A.">
        <title>Genomic plasticity of the causative agent of melioidosis, Burkholderia pseudomallei.</title>
        <authorList>
            <person name="Holden M.T.G."/>
            <person name="Titball R.W."/>
            <person name="Peacock S.J."/>
            <person name="Cerdeno-Tarraga A.-M."/>
            <person name="Atkins T."/>
            <person name="Crossman L.C."/>
            <person name="Pitt T."/>
            <person name="Churcher C."/>
            <person name="Mungall K.L."/>
            <person name="Bentley S.D."/>
            <person name="Sebaihia M."/>
            <person name="Thomson N.R."/>
            <person name="Bason N."/>
            <person name="Beacham I.R."/>
            <person name="Brooks K."/>
            <person name="Brown K.A."/>
            <person name="Brown N.F."/>
            <person name="Challis G.L."/>
            <person name="Cherevach I."/>
            <person name="Chillingworth T."/>
            <person name="Cronin A."/>
            <person name="Crossett B."/>
            <person name="Davis P."/>
            <person name="DeShazer D."/>
            <person name="Feltwell T."/>
            <person name="Fraser A."/>
            <person name="Hance Z."/>
            <person name="Hauser H."/>
            <person name="Holroyd S."/>
            <person name="Jagels K."/>
            <person name="Keith K.E."/>
            <person name="Maddison M."/>
            <person name="Moule S."/>
            <person name="Price C."/>
            <person name="Quail M.A."/>
            <person name="Rabbinowitsch E."/>
            <person name="Rutherford K."/>
            <person name="Sanders M."/>
            <person name="Simmonds M."/>
            <person name="Songsivilai S."/>
            <person name="Stevens K."/>
            <person name="Tumapa S."/>
            <person name="Vesaratchavest M."/>
            <person name="Whitehead S."/>
            <person name="Yeats C."/>
            <person name="Barrell B.G."/>
            <person name="Oyston P.C.F."/>
            <person name="Parkhill J."/>
        </authorList>
    </citation>
    <scope>NUCLEOTIDE SEQUENCE [LARGE SCALE GENOMIC DNA]</scope>
    <source>
        <strain>K96243</strain>
    </source>
</reference>
<name>Y5206_BURPS</name>
<keyword id="KW-0223">Dioxygenase</keyword>
<keyword id="KW-0408">Iron</keyword>
<keyword id="KW-0479">Metal-binding</keyword>
<keyword id="KW-0560">Oxidoreductase</keyword>
<keyword id="KW-1185">Reference proteome</keyword>
<keyword id="KW-0847">Vitamin C</keyword>
<proteinExistence type="inferred from homology"/>